<accession>Q8DAM0</accession>
<organism>
    <name type="scientific">Vibrio vulnificus (strain CMCP6)</name>
    <dbReference type="NCBI Taxonomy" id="216895"/>
    <lineage>
        <taxon>Bacteria</taxon>
        <taxon>Pseudomonadati</taxon>
        <taxon>Pseudomonadota</taxon>
        <taxon>Gammaproteobacteria</taxon>
        <taxon>Vibrionales</taxon>
        <taxon>Vibrionaceae</taxon>
        <taxon>Vibrio</taxon>
    </lineage>
</organism>
<reference key="1">
    <citation type="submission" date="2002-12" db="EMBL/GenBank/DDBJ databases">
        <title>Complete genome sequence of Vibrio vulnificus CMCP6.</title>
        <authorList>
            <person name="Rhee J.H."/>
            <person name="Kim S.Y."/>
            <person name="Chung S.S."/>
            <person name="Kim J.J."/>
            <person name="Moon Y.H."/>
            <person name="Jeong H."/>
            <person name="Choy H.E."/>
        </authorList>
    </citation>
    <scope>NUCLEOTIDE SEQUENCE [LARGE SCALE GENOMIC DNA]</scope>
    <source>
        <strain>CMCP6</strain>
    </source>
</reference>
<keyword id="KW-0004">4Fe-4S</keyword>
<keyword id="KW-0963">Cytoplasm</keyword>
<keyword id="KW-0408">Iron</keyword>
<keyword id="KW-0411">Iron-sulfur</keyword>
<keyword id="KW-0479">Metal-binding</keyword>
<keyword id="KW-0662">Pyridine nucleotide biosynthesis</keyword>
<keyword id="KW-0808">Transferase</keyword>
<name>NADA_VIBVU</name>
<gene>
    <name evidence="1" type="primary">nadA</name>
    <name type="ordered locus">VV1_2173</name>
</gene>
<feature type="chain" id="PRO_0000155775" description="Quinolinate synthase">
    <location>
        <begin position="1"/>
        <end position="353"/>
    </location>
</feature>
<feature type="binding site" evidence="1">
    <location>
        <position position="47"/>
    </location>
    <ligand>
        <name>iminosuccinate</name>
        <dbReference type="ChEBI" id="CHEBI:77875"/>
    </ligand>
</feature>
<feature type="binding site" evidence="1">
    <location>
        <position position="68"/>
    </location>
    <ligand>
        <name>iminosuccinate</name>
        <dbReference type="ChEBI" id="CHEBI:77875"/>
    </ligand>
</feature>
<feature type="binding site" evidence="1">
    <location>
        <position position="113"/>
    </location>
    <ligand>
        <name>[4Fe-4S] cluster</name>
        <dbReference type="ChEBI" id="CHEBI:49883"/>
    </ligand>
</feature>
<feature type="binding site" evidence="1">
    <location>
        <begin position="139"/>
        <end position="141"/>
    </location>
    <ligand>
        <name>iminosuccinate</name>
        <dbReference type="ChEBI" id="CHEBI:77875"/>
    </ligand>
</feature>
<feature type="binding site" evidence="1">
    <location>
        <position position="156"/>
    </location>
    <ligand>
        <name>iminosuccinate</name>
        <dbReference type="ChEBI" id="CHEBI:77875"/>
    </ligand>
</feature>
<feature type="binding site" evidence="1">
    <location>
        <position position="200"/>
    </location>
    <ligand>
        <name>[4Fe-4S] cluster</name>
        <dbReference type="ChEBI" id="CHEBI:49883"/>
    </ligand>
</feature>
<feature type="binding site" evidence="1">
    <location>
        <begin position="226"/>
        <end position="228"/>
    </location>
    <ligand>
        <name>iminosuccinate</name>
        <dbReference type="ChEBI" id="CHEBI:77875"/>
    </ligand>
</feature>
<feature type="binding site" evidence="1">
    <location>
        <position position="243"/>
    </location>
    <ligand>
        <name>iminosuccinate</name>
        <dbReference type="ChEBI" id="CHEBI:77875"/>
    </ligand>
</feature>
<feature type="binding site" evidence="1">
    <location>
        <position position="297"/>
    </location>
    <ligand>
        <name>[4Fe-4S] cluster</name>
        <dbReference type="ChEBI" id="CHEBI:49883"/>
    </ligand>
</feature>
<proteinExistence type="inferred from homology"/>
<evidence type="ECO:0000255" key="1">
    <source>
        <dbReference type="HAMAP-Rule" id="MF_00567"/>
    </source>
</evidence>
<sequence>MSHILDKIDTVYPFPPKPIPLTQDEKAAYIASIKQLLNEKDAVLIAHYYTDPEIQALAEETGGFVGDSLEMAKFGNRHPAGTLIIAGVRFMGESAKILTPEKRILMPTLEAECSLDLGCPADKFTEFCDAHPDHTVVVYANTSAAVKARADWVVTSSIALEIVEHLDAEDKPIIWGPDRHLGSYIANKTGADMLLWQGECVVHDEFSADALRKMKAVYPDAAILVHPESPASVVELADAVGSTSQLIKAAKELPQQKMIVATDKGIFFKMQQLVPEKELIEAPTAGAGATCRSCAHCPWMAMNGLKAIETALREGGEQHEIFVDEALRVKSLIPLNRMLDFAEKLNMQVKGNA</sequence>
<dbReference type="EC" id="2.5.1.72" evidence="1"/>
<dbReference type="EMBL" id="AE016795">
    <property type="protein sequence ID" value="AAO10558.1"/>
    <property type="molecule type" value="Genomic_DNA"/>
</dbReference>
<dbReference type="RefSeq" id="WP_011080050.1">
    <property type="nucleotide sequence ID" value="NC_004459.3"/>
</dbReference>
<dbReference type="SMR" id="Q8DAM0"/>
<dbReference type="KEGG" id="vvu:VV1_2173"/>
<dbReference type="HOGENOM" id="CLU_047382_1_0_6"/>
<dbReference type="UniPathway" id="UPA00253">
    <property type="reaction ID" value="UER00327"/>
</dbReference>
<dbReference type="Proteomes" id="UP000002275">
    <property type="component" value="Chromosome 1"/>
</dbReference>
<dbReference type="GO" id="GO:0005829">
    <property type="term" value="C:cytosol"/>
    <property type="evidence" value="ECO:0007669"/>
    <property type="project" value="TreeGrafter"/>
</dbReference>
<dbReference type="GO" id="GO:0051539">
    <property type="term" value="F:4 iron, 4 sulfur cluster binding"/>
    <property type="evidence" value="ECO:0007669"/>
    <property type="project" value="UniProtKB-KW"/>
</dbReference>
<dbReference type="GO" id="GO:0046872">
    <property type="term" value="F:metal ion binding"/>
    <property type="evidence" value="ECO:0007669"/>
    <property type="project" value="UniProtKB-KW"/>
</dbReference>
<dbReference type="GO" id="GO:0008987">
    <property type="term" value="F:quinolinate synthetase A activity"/>
    <property type="evidence" value="ECO:0007669"/>
    <property type="project" value="UniProtKB-UniRule"/>
</dbReference>
<dbReference type="GO" id="GO:0034628">
    <property type="term" value="P:'de novo' NAD biosynthetic process from L-aspartate"/>
    <property type="evidence" value="ECO:0007669"/>
    <property type="project" value="TreeGrafter"/>
</dbReference>
<dbReference type="FunFam" id="3.40.50.10800:FF:000001">
    <property type="entry name" value="Quinolinate synthase A"/>
    <property type="match status" value="1"/>
</dbReference>
<dbReference type="FunFam" id="3.40.50.10800:FF:000003">
    <property type="entry name" value="Quinolinate synthase A"/>
    <property type="match status" value="1"/>
</dbReference>
<dbReference type="Gene3D" id="3.40.50.10800">
    <property type="entry name" value="NadA-like"/>
    <property type="match status" value="3"/>
</dbReference>
<dbReference type="HAMAP" id="MF_00567">
    <property type="entry name" value="NadA_type1"/>
    <property type="match status" value="1"/>
</dbReference>
<dbReference type="InterPro" id="IPR003473">
    <property type="entry name" value="NadA"/>
</dbReference>
<dbReference type="InterPro" id="IPR036094">
    <property type="entry name" value="NadA_sf"/>
</dbReference>
<dbReference type="InterPro" id="IPR023513">
    <property type="entry name" value="Quinolinate_synth_A_type1"/>
</dbReference>
<dbReference type="NCBIfam" id="TIGR00550">
    <property type="entry name" value="nadA"/>
    <property type="match status" value="1"/>
</dbReference>
<dbReference type="NCBIfam" id="NF006877">
    <property type="entry name" value="PRK09375.1-1"/>
    <property type="match status" value="1"/>
</dbReference>
<dbReference type="NCBIfam" id="NF006878">
    <property type="entry name" value="PRK09375.1-2"/>
    <property type="match status" value="1"/>
</dbReference>
<dbReference type="PANTHER" id="PTHR30573:SF0">
    <property type="entry name" value="QUINOLINATE SYNTHASE, CHLOROPLASTIC"/>
    <property type="match status" value="1"/>
</dbReference>
<dbReference type="PANTHER" id="PTHR30573">
    <property type="entry name" value="QUINOLINATE SYNTHETASE A"/>
    <property type="match status" value="1"/>
</dbReference>
<dbReference type="Pfam" id="PF02445">
    <property type="entry name" value="NadA"/>
    <property type="match status" value="1"/>
</dbReference>
<dbReference type="SUPFAM" id="SSF142754">
    <property type="entry name" value="NadA-like"/>
    <property type="match status" value="1"/>
</dbReference>
<comment type="function">
    <text evidence="1">Catalyzes the condensation of iminoaspartate with dihydroxyacetone phosphate to form quinolinate.</text>
</comment>
<comment type="catalytic activity">
    <reaction evidence="1">
        <text>iminosuccinate + dihydroxyacetone phosphate = quinolinate + phosphate + 2 H2O + H(+)</text>
        <dbReference type="Rhea" id="RHEA:25888"/>
        <dbReference type="ChEBI" id="CHEBI:15377"/>
        <dbReference type="ChEBI" id="CHEBI:15378"/>
        <dbReference type="ChEBI" id="CHEBI:29959"/>
        <dbReference type="ChEBI" id="CHEBI:43474"/>
        <dbReference type="ChEBI" id="CHEBI:57642"/>
        <dbReference type="ChEBI" id="CHEBI:77875"/>
        <dbReference type="EC" id="2.5.1.72"/>
    </reaction>
    <physiologicalReaction direction="left-to-right" evidence="1">
        <dbReference type="Rhea" id="RHEA:25889"/>
    </physiologicalReaction>
</comment>
<comment type="cofactor">
    <cofactor evidence="1">
        <name>[4Fe-4S] cluster</name>
        <dbReference type="ChEBI" id="CHEBI:49883"/>
    </cofactor>
    <text evidence="1">Binds 1 [4Fe-4S] cluster per subunit.</text>
</comment>
<comment type="pathway">
    <text evidence="1">Cofactor biosynthesis; NAD(+) biosynthesis; quinolinate from iminoaspartate: step 1/1.</text>
</comment>
<comment type="subcellular location">
    <subcellularLocation>
        <location evidence="1">Cytoplasm</location>
    </subcellularLocation>
</comment>
<comment type="similarity">
    <text evidence="1">Belongs to the quinolinate synthase family. Type 1 subfamily.</text>
</comment>
<protein>
    <recommendedName>
        <fullName evidence="1">Quinolinate synthase</fullName>
        <ecNumber evidence="1">2.5.1.72</ecNumber>
    </recommendedName>
</protein>